<dbReference type="EMBL" id="AL591688">
    <property type="protein sequence ID" value="CAC46109.1"/>
    <property type="molecule type" value="Genomic_DNA"/>
</dbReference>
<dbReference type="RefSeq" id="NP_385636.1">
    <property type="nucleotide sequence ID" value="NC_003047.1"/>
</dbReference>
<dbReference type="RefSeq" id="WP_010969282.1">
    <property type="nucleotide sequence ID" value="NC_003047.1"/>
</dbReference>
<dbReference type="SMR" id="Q92Q24"/>
<dbReference type="EnsemblBacteria" id="CAC46109">
    <property type="protein sequence ID" value="CAC46109"/>
    <property type="gene ID" value="SMc02066"/>
</dbReference>
<dbReference type="KEGG" id="sme:SMc02066"/>
<dbReference type="PATRIC" id="fig|266834.11.peg.2953"/>
<dbReference type="eggNOG" id="COG1826">
    <property type="taxonomic scope" value="Bacteria"/>
</dbReference>
<dbReference type="HOGENOM" id="CLU_086034_1_3_5"/>
<dbReference type="OrthoDB" id="7206969at2"/>
<dbReference type="Proteomes" id="UP000001976">
    <property type="component" value="Chromosome"/>
</dbReference>
<dbReference type="GO" id="GO:0033281">
    <property type="term" value="C:TAT protein transport complex"/>
    <property type="evidence" value="ECO:0007669"/>
    <property type="project" value="UniProtKB-UniRule"/>
</dbReference>
<dbReference type="GO" id="GO:0008320">
    <property type="term" value="F:protein transmembrane transporter activity"/>
    <property type="evidence" value="ECO:0007669"/>
    <property type="project" value="UniProtKB-UniRule"/>
</dbReference>
<dbReference type="GO" id="GO:0043953">
    <property type="term" value="P:protein transport by the Tat complex"/>
    <property type="evidence" value="ECO:0007669"/>
    <property type="project" value="UniProtKB-UniRule"/>
</dbReference>
<dbReference type="Gene3D" id="1.20.5.3310">
    <property type="match status" value="1"/>
</dbReference>
<dbReference type="HAMAP" id="MF_00237">
    <property type="entry name" value="TatB"/>
    <property type="match status" value="1"/>
</dbReference>
<dbReference type="InterPro" id="IPR003369">
    <property type="entry name" value="TatA/B/E"/>
</dbReference>
<dbReference type="InterPro" id="IPR018448">
    <property type="entry name" value="TatB"/>
</dbReference>
<dbReference type="NCBIfam" id="TIGR01410">
    <property type="entry name" value="tatB"/>
    <property type="match status" value="1"/>
</dbReference>
<dbReference type="Pfam" id="PF02416">
    <property type="entry name" value="TatA_B_E"/>
    <property type="match status" value="1"/>
</dbReference>
<dbReference type="PRINTS" id="PR01506">
    <property type="entry name" value="TATBPROTEIN"/>
</dbReference>
<evidence type="ECO:0000255" key="1">
    <source>
        <dbReference type="HAMAP-Rule" id="MF_00237"/>
    </source>
</evidence>
<evidence type="ECO:0000256" key="2">
    <source>
        <dbReference type="SAM" id="MobiDB-lite"/>
    </source>
</evidence>
<comment type="function">
    <text evidence="1">Part of the twin-arginine translocation (Tat) system that transports large folded proteins containing a characteristic twin-arginine motif in their signal peptide across membranes. Together with TatC, TatB is part of a receptor directly interacting with Tat signal peptides. TatB may form an oligomeric binding site that transiently accommodates folded Tat precursor proteins before their translocation.</text>
</comment>
<comment type="subunit">
    <text evidence="1">The Tat system comprises two distinct complexes: a TatABC complex, containing multiple copies of TatA, TatB and TatC subunits, and a separate TatA complex, containing only TatA subunits. Substrates initially bind to the TatABC complex, which probably triggers association of the separate TatA complex to form the active translocon.</text>
</comment>
<comment type="subcellular location">
    <subcellularLocation>
        <location evidence="1">Cell inner membrane</location>
        <topology evidence="1">Single-pass membrane protein</topology>
    </subcellularLocation>
</comment>
<comment type="similarity">
    <text evidence="1">Belongs to the TatB family.</text>
</comment>
<feature type="chain" id="PRO_0000192667" description="Sec-independent protein translocase protein TatB">
    <location>
        <begin position="1"/>
        <end position="215"/>
    </location>
</feature>
<feature type="transmembrane region" description="Helical" evidence="1">
    <location>
        <begin position="1"/>
        <end position="21"/>
    </location>
</feature>
<feature type="region of interest" description="Disordered" evidence="2">
    <location>
        <begin position="95"/>
        <end position="119"/>
    </location>
</feature>
<feature type="region of interest" description="Disordered" evidence="2">
    <location>
        <begin position="138"/>
        <end position="215"/>
    </location>
</feature>
<feature type="compositionally biased region" description="Basic and acidic residues" evidence="2">
    <location>
        <begin position="145"/>
        <end position="157"/>
    </location>
</feature>
<feature type="compositionally biased region" description="Basic residues" evidence="2">
    <location>
        <begin position="203"/>
        <end position="215"/>
    </location>
</feature>
<proteinExistence type="inferred from homology"/>
<keyword id="KW-0997">Cell inner membrane</keyword>
<keyword id="KW-1003">Cell membrane</keyword>
<keyword id="KW-0472">Membrane</keyword>
<keyword id="KW-0653">Protein transport</keyword>
<keyword id="KW-1185">Reference proteome</keyword>
<keyword id="KW-0811">Translocation</keyword>
<keyword id="KW-0812">Transmembrane</keyword>
<keyword id="KW-1133">Transmembrane helix</keyword>
<keyword id="KW-0813">Transport</keyword>
<organism>
    <name type="scientific">Rhizobium meliloti (strain 1021)</name>
    <name type="common">Ensifer meliloti</name>
    <name type="synonym">Sinorhizobium meliloti</name>
    <dbReference type="NCBI Taxonomy" id="266834"/>
    <lineage>
        <taxon>Bacteria</taxon>
        <taxon>Pseudomonadati</taxon>
        <taxon>Pseudomonadota</taxon>
        <taxon>Alphaproteobacteria</taxon>
        <taxon>Hyphomicrobiales</taxon>
        <taxon>Rhizobiaceae</taxon>
        <taxon>Sinorhizobium/Ensifer group</taxon>
        <taxon>Sinorhizobium</taxon>
    </lineage>
</organism>
<name>TATB_RHIME</name>
<gene>
    <name evidence="1" type="primary">tatB</name>
    <name type="ordered locus">R01530</name>
    <name type="ORF">SMc02066</name>
</gene>
<protein>
    <recommendedName>
        <fullName evidence="1">Sec-independent protein translocase protein TatB</fullName>
    </recommendedName>
</protein>
<sequence length="215" mass="22754">MLDIGWTELVVIAIVLIIVVGPKDLPPMLRAFGRMTSKMRGMASDFRRQFDEALREADLDDVRKTISDAQSLNPTAALRDAMNPLRQLGNEIKSDLQKATTPDRPPASATPEPLVEPVNTDAVGETAAKATEKVAAAAVSSASRQMDRAADVPKASEPKPAPKPRAQSKKPGTSVTKKAAGETAPKKSPARKAPGEAPAANKSKTRAASRKKGDA</sequence>
<reference key="1">
    <citation type="journal article" date="2001" name="Proc. Natl. Acad. Sci. U.S.A.">
        <title>Analysis of the chromosome sequence of the legume symbiont Sinorhizobium meliloti strain 1021.</title>
        <authorList>
            <person name="Capela D."/>
            <person name="Barloy-Hubler F."/>
            <person name="Gouzy J."/>
            <person name="Bothe G."/>
            <person name="Ampe F."/>
            <person name="Batut J."/>
            <person name="Boistard P."/>
            <person name="Becker A."/>
            <person name="Boutry M."/>
            <person name="Cadieu E."/>
            <person name="Dreano S."/>
            <person name="Gloux S."/>
            <person name="Godrie T."/>
            <person name="Goffeau A."/>
            <person name="Kahn D."/>
            <person name="Kiss E."/>
            <person name="Lelaure V."/>
            <person name="Masuy D."/>
            <person name="Pohl T."/>
            <person name="Portetelle D."/>
            <person name="Puehler A."/>
            <person name="Purnelle B."/>
            <person name="Ramsperger U."/>
            <person name="Renard C."/>
            <person name="Thebault P."/>
            <person name="Vandenbol M."/>
            <person name="Weidner S."/>
            <person name="Galibert F."/>
        </authorList>
    </citation>
    <scope>NUCLEOTIDE SEQUENCE [LARGE SCALE GENOMIC DNA]</scope>
    <source>
        <strain>1021</strain>
    </source>
</reference>
<reference key="2">
    <citation type="journal article" date="2001" name="Science">
        <title>The composite genome of the legume symbiont Sinorhizobium meliloti.</title>
        <authorList>
            <person name="Galibert F."/>
            <person name="Finan T.M."/>
            <person name="Long S.R."/>
            <person name="Puehler A."/>
            <person name="Abola P."/>
            <person name="Ampe F."/>
            <person name="Barloy-Hubler F."/>
            <person name="Barnett M.J."/>
            <person name="Becker A."/>
            <person name="Boistard P."/>
            <person name="Bothe G."/>
            <person name="Boutry M."/>
            <person name="Bowser L."/>
            <person name="Buhrmester J."/>
            <person name="Cadieu E."/>
            <person name="Capela D."/>
            <person name="Chain P."/>
            <person name="Cowie A."/>
            <person name="Davis R.W."/>
            <person name="Dreano S."/>
            <person name="Federspiel N.A."/>
            <person name="Fisher R.F."/>
            <person name="Gloux S."/>
            <person name="Godrie T."/>
            <person name="Goffeau A."/>
            <person name="Golding B."/>
            <person name="Gouzy J."/>
            <person name="Gurjal M."/>
            <person name="Hernandez-Lucas I."/>
            <person name="Hong A."/>
            <person name="Huizar L."/>
            <person name="Hyman R.W."/>
            <person name="Jones T."/>
            <person name="Kahn D."/>
            <person name="Kahn M.L."/>
            <person name="Kalman S."/>
            <person name="Keating D.H."/>
            <person name="Kiss E."/>
            <person name="Komp C."/>
            <person name="Lelaure V."/>
            <person name="Masuy D."/>
            <person name="Palm C."/>
            <person name="Peck M.C."/>
            <person name="Pohl T.M."/>
            <person name="Portetelle D."/>
            <person name="Purnelle B."/>
            <person name="Ramsperger U."/>
            <person name="Surzycki R."/>
            <person name="Thebault P."/>
            <person name="Vandenbol M."/>
            <person name="Vorhoelter F.J."/>
            <person name="Weidner S."/>
            <person name="Wells D.H."/>
            <person name="Wong K."/>
            <person name="Yeh K.-C."/>
            <person name="Batut J."/>
        </authorList>
    </citation>
    <scope>NUCLEOTIDE SEQUENCE [LARGE SCALE GENOMIC DNA]</scope>
    <source>
        <strain>1021</strain>
    </source>
</reference>
<accession>Q92Q24</accession>